<protein>
    <recommendedName>
        <fullName evidence="1">1,4-alpha-glucan branching enzyme GlgB</fullName>
        <ecNumber evidence="1">2.4.1.18</ecNumber>
    </recommendedName>
    <alternativeName>
        <fullName evidence="1">1,4-alpha-D-glucan:1,4-alpha-D-glucan 6-glucosyl-transferase</fullName>
    </alternativeName>
    <alternativeName>
        <fullName evidence="1">Alpha-(1-&gt;4)-glucan branching enzyme</fullName>
    </alternativeName>
    <alternativeName>
        <fullName evidence="1">Glycogen branching enzyme</fullName>
        <shortName evidence="1">BE</shortName>
    </alternativeName>
</protein>
<sequence>MSFSNKEQGKQQPALLPSAKAIDALVRAEHRDPFAILGPHGDGAGGQFIRAFLPGALSVQVLDRDQQQVLGSLQAGEVPGLFVGHFPEARPYLLRIQWAGGEQVSEDPYSFGPLLGEMDLYLFAEGNHRDLSSCLGAQLTTVDGIDGVRFAVWAPNARRVSVVGDFNIWDGRRHPMRLRHPSGVWELFIPRLQAGEAYKYEILGPQGILPLKADPMALATQLPPDTASRVAPPLTIDWQDQEWMLARGERQRVDAPLSIYELHAGSWQCEVDDLGEVARQYSWAELAERLIPYVKDLGFTHIELMPIMEHPFGGSWGYQPLSQFAPSARYGSPQDFAAFIDACHQAGIGVILDWVPAHFPTDTHGLAQFDGTALYEYGNPLEGFHQDWDTLIYNLGRTEVHGFMLASALHWLKHFHVDGLRVDAVASMLYRDYSRKAGEWVPNRHGGRENLEAIDFLRHLNDVVALEAPGALVIAEESTAWPGVSQRTDQGGLGFAYKWNMGWMHDSLHYIQQDPVYRAHHHNELSFGLVYAWSERFILPISHDEVVHGKHSLIDKMPGDRWQKFANLRAYLSFMWAHPGKKLLFMGCEFGQWREWNHDQQLDWYLLQYPEHRGVQQLVGDLNRLYRQYPPLHDQDDVPQGFQWLIGDDAINSVYAWLRWSKSGEPLLVVANFTPVPRQGYRVGVPVAGRWSELLNSDSQLYAGSNYGNGGEAFSEEQSSHGQALSLVLNLPPLAVLILRPDS</sequence>
<accession>Q4KCQ3</accession>
<proteinExistence type="inferred from homology"/>
<feature type="chain" id="PRO_0000260677" description="1,4-alpha-glucan branching enzyme GlgB">
    <location>
        <begin position="1"/>
        <end position="743"/>
    </location>
</feature>
<feature type="active site" description="Nucleophile" evidence="1">
    <location>
        <position position="423"/>
    </location>
</feature>
<feature type="active site" description="Proton donor" evidence="1">
    <location>
        <position position="476"/>
    </location>
</feature>
<evidence type="ECO:0000255" key="1">
    <source>
        <dbReference type="HAMAP-Rule" id="MF_00685"/>
    </source>
</evidence>
<dbReference type="EC" id="2.4.1.18" evidence="1"/>
<dbReference type="EMBL" id="CP000076">
    <property type="protein sequence ID" value="AAY92146.1"/>
    <property type="molecule type" value="Genomic_DNA"/>
</dbReference>
<dbReference type="RefSeq" id="WP_011061163.1">
    <property type="nucleotide sequence ID" value="NC_004129.6"/>
</dbReference>
<dbReference type="SMR" id="Q4KCQ3"/>
<dbReference type="STRING" id="220664.PFL_2874"/>
<dbReference type="CAZy" id="CBM48">
    <property type="family name" value="Carbohydrate-Binding Module Family 48"/>
</dbReference>
<dbReference type="CAZy" id="GH13">
    <property type="family name" value="Glycoside Hydrolase Family 13"/>
</dbReference>
<dbReference type="KEGG" id="pfl:PFL_2874"/>
<dbReference type="PATRIC" id="fig|220664.5.peg.2929"/>
<dbReference type="eggNOG" id="COG0296">
    <property type="taxonomic scope" value="Bacteria"/>
</dbReference>
<dbReference type="HOGENOM" id="CLU_004245_3_2_6"/>
<dbReference type="UniPathway" id="UPA00164"/>
<dbReference type="Proteomes" id="UP000008540">
    <property type="component" value="Chromosome"/>
</dbReference>
<dbReference type="GO" id="GO:0005829">
    <property type="term" value="C:cytosol"/>
    <property type="evidence" value="ECO:0007669"/>
    <property type="project" value="TreeGrafter"/>
</dbReference>
<dbReference type="GO" id="GO:0003844">
    <property type="term" value="F:1,4-alpha-glucan branching enzyme activity"/>
    <property type="evidence" value="ECO:0007669"/>
    <property type="project" value="UniProtKB-UniRule"/>
</dbReference>
<dbReference type="GO" id="GO:0043169">
    <property type="term" value="F:cation binding"/>
    <property type="evidence" value="ECO:0007669"/>
    <property type="project" value="InterPro"/>
</dbReference>
<dbReference type="GO" id="GO:0004553">
    <property type="term" value="F:hydrolase activity, hydrolyzing O-glycosyl compounds"/>
    <property type="evidence" value="ECO:0007669"/>
    <property type="project" value="InterPro"/>
</dbReference>
<dbReference type="GO" id="GO:0005978">
    <property type="term" value="P:glycogen biosynthetic process"/>
    <property type="evidence" value="ECO:0007669"/>
    <property type="project" value="UniProtKB-UniRule"/>
</dbReference>
<dbReference type="CDD" id="cd11322">
    <property type="entry name" value="AmyAc_Glg_BE"/>
    <property type="match status" value="1"/>
</dbReference>
<dbReference type="CDD" id="cd02855">
    <property type="entry name" value="E_set_GBE_prok_N"/>
    <property type="match status" value="1"/>
</dbReference>
<dbReference type="FunFam" id="2.60.40.10:FF:000169">
    <property type="entry name" value="1,4-alpha-glucan branching enzyme GlgB"/>
    <property type="match status" value="1"/>
</dbReference>
<dbReference type="FunFam" id="2.60.40.1180:FF:000002">
    <property type="entry name" value="1,4-alpha-glucan branching enzyme GlgB"/>
    <property type="match status" value="1"/>
</dbReference>
<dbReference type="FunFam" id="3.20.20.80:FF:000003">
    <property type="entry name" value="1,4-alpha-glucan branching enzyme GlgB"/>
    <property type="match status" value="1"/>
</dbReference>
<dbReference type="Gene3D" id="3.20.20.80">
    <property type="entry name" value="Glycosidases"/>
    <property type="match status" value="1"/>
</dbReference>
<dbReference type="Gene3D" id="2.60.40.1180">
    <property type="entry name" value="Golgi alpha-mannosidase II"/>
    <property type="match status" value="1"/>
</dbReference>
<dbReference type="Gene3D" id="2.60.40.10">
    <property type="entry name" value="Immunoglobulins"/>
    <property type="match status" value="1"/>
</dbReference>
<dbReference type="HAMAP" id="MF_00685">
    <property type="entry name" value="GlgB"/>
    <property type="match status" value="1"/>
</dbReference>
<dbReference type="InterPro" id="IPR006048">
    <property type="entry name" value="A-amylase/branching_C"/>
</dbReference>
<dbReference type="InterPro" id="IPR037439">
    <property type="entry name" value="Branching_enzy"/>
</dbReference>
<dbReference type="InterPro" id="IPR006407">
    <property type="entry name" value="GlgB"/>
</dbReference>
<dbReference type="InterPro" id="IPR054169">
    <property type="entry name" value="GlgB_N"/>
</dbReference>
<dbReference type="InterPro" id="IPR044143">
    <property type="entry name" value="GlgB_N_E_set_prok"/>
</dbReference>
<dbReference type="InterPro" id="IPR006047">
    <property type="entry name" value="Glyco_hydro_13_cat_dom"/>
</dbReference>
<dbReference type="InterPro" id="IPR004193">
    <property type="entry name" value="Glyco_hydro_13_N"/>
</dbReference>
<dbReference type="InterPro" id="IPR013780">
    <property type="entry name" value="Glyco_hydro_b"/>
</dbReference>
<dbReference type="InterPro" id="IPR017853">
    <property type="entry name" value="Glycoside_hydrolase_SF"/>
</dbReference>
<dbReference type="InterPro" id="IPR013783">
    <property type="entry name" value="Ig-like_fold"/>
</dbReference>
<dbReference type="InterPro" id="IPR014756">
    <property type="entry name" value="Ig_E-set"/>
</dbReference>
<dbReference type="NCBIfam" id="TIGR01515">
    <property type="entry name" value="branching_enzym"/>
    <property type="match status" value="1"/>
</dbReference>
<dbReference type="NCBIfam" id="NF003811">
    <property type="entry name" value="PRK05402.1"/>
    <property type="match status" value="1"/>
</dbReference>
<dbReference type="NCBIfam" id="NF008967">
    <property type="entry name" value="PRK12313.1"/>
    <property type="match status" value="1"/>
</dbReference>
<dbReference type="PANTHER" id="PTHR43651">
    <property type="entry name" value="1,4-ALPHA-GLUCAN-BRANCHING ENZYME"/>
    <property type="match status" value="1"/>
</dbReference>
<dbReference type="PANTHER" id="PTHR43651:SF3">
    <property type="entry name" value="1,4-ALPHA-GLUCAN-BRANCHING ENZYME"/>
    <property type="match status" value="1"/>
</dbReference>
<dbReference type="Pfam" id="PF00128">
    <property type="entry name" value="Alpha-amylase"/>
    <property type="match status" value="1"/>
</dbReference>
<dbReference type="Pfam" id="PF02806">
    <property type="entry name" value="Alpha-amylase_C"/>
    <property type="match status" value="1"/>
</dbReference>
<dbReference type="Pfam" id="PF02922">
    <property type="entry name" value="CBM_48"/>
    <property type="match status" value="1"/>
</dbReference>
<dbReference type="Pfam" id="PF22019">
    <property type="entry name" value="GlgB_N"/>
    <property type="match status" value="1"/>
</dbReference>
<dbReference type="PIRSF" id="PIRSF000463">
    <property type="entry name" value="GlgB"/>
    <property type="match status" value="1"/>
</dbReference>
<dbReference type="SMART" id="SM00642">
    <property type="entry name" value="Aamy"/>
    <property type="match status" value="1"/>
</dbReference>
<dbReference type="SUPFAM" id="SSF51445">
    <property type="entry name" value="(Trans)glycosidases"/>
    <property type="match status" value="1"/>
</dbReference>
<dbReference type="SUPFAM" id="SSF81296">
    <property type="entry name" value="E set domains"/>
    <property type="match status" value="2"/>
</dbReference>
<dbReference type="SUPFAM" id="SSF51011">
    <property type="entry name" value="Glycosyl hydrolase domain"/>
    <property type="match status" value="1"/>
</dbReference>
<comment type="function">
    <text evidence="1">Catalyzes the formation of the alpha-1,6-glucosidic linkages in glycogen by scission of a 1,4-alpha-linked oligosaccharide from growing alpha-1,4-glucan chains and the subsequent attachment of the oligosaccharide to the alpha-1,6 position.</text>
</comment>
<comment type="catalytic activity">
    <reaction evidence="1">
        <text>Transfers a segment of a (1-&gt;4)-alpha-D-glucan chain to a primary hydroxy group in a similar glucan chain.</text>
        <dbReference type="EC" id="2.4.1.18"/>
    </reaction>
</comment>
<comment type="pathway">
    <text evidence="1">Glycan biosynthesis; glycogen biosynthesis.</text>
</comment>
<comment type="subunit">
    <text evidence="1">Monomer.</text>
</comment>
<comment type="similarity">
    <text evidence="1">Belongs to the glycosyl hydrolase 13 family. GlgB subfamily.</text>
</comment>
<name>GLGB_PSEF5</name>
<organism>
    <name type="scientific">Pseudomonas fluorescens (strain ATCC BAA-477 / NRRL B-23932 / Pf-5)</name>
    <dbReference type="NCBI Taxonomy" id="220664"/>
    <lineage>
        <taxon>Bacteria</taxon>
        <taxon>Pseudomonadati</taxon>
        <taxon>Pseudomonadota</taxon>
        <taxon>Gammaproteobacteria</taxon>
        <taxon>Pseudomonadales</taxon>
        <taxon>Pseudomonadaceae</taxon>
        <taxon>Pseudomonas</taxon>
    </lineage>
</organism>
<keyword id="KW-0119">Carbohydrate metabolism</keyword>
<keyword id="KW-0320">Glycogen biosynthesis</keyword>
<keyword id="KW-0321">Glycogen metabolism</keyword>
<keyword id="KW-0328">Glycosyltransferase</keyword>
<keyword id="KW-0808">Transferase</keyword>
<gene>
    <name evidence="1" type="primary">glgB</name>
    <name type="ordered locus">PFL_2874</name>
</gene>
<reference key="1">
    <citation type="journal article" date="2005" name="Nat. Biotechnol.">
        <title>Complete genome sequence of the plant commensal Pseudomonas fluorescens Pf-5.</title>
        <authorList>
            <person name="Paulsen I.T."/>
            <person name="Press C.M."/>
            <person name="Ravel J."/>
            <person name="Kobayashi D.Y."/>
            <person name="Myers G.S.A."/>
            <person name="Mavrodi D.V."/>
            <person name="DeBoy R.T."/>
            <person name="Seshadri R."/>
            <person name="Ren Q."/>
            <person name="Madupu R."/>
            <person name="Dodson R.J."/>
            <person name="Durkin A.S."/>
            <person name="Brinkac L.M."/>
            <person name="Daugherty S.C."/>
            <person name="Sullivan S.A."/>
            <person name="Rosovitz M.J."/>
            <person name="Gwinn M.L."/>
            <person name="Zhou L."/>
            <person name="Schneider D.J."/>
            <person name="Cartinhour S.W."/>
            <person name="Nelson W.C."/>
            <person name="Weidman J."/>
            <person name="Watkins K."/>
            <person name="Tran K."/>
            <person name="Khouri H."/>
            <person name="Pierson E.A."/>
            <person name="Pierson L.S. III"/>
            <person name="Thomashow L.S."/>
            <person name="Loper J.E."/>
        </authorList>
    </citation>
    <scope>NUCLEOTIDE SEQUENCE [LARGE SCALE GENOMIC DNA]</scope>
    <source>
        <strain>ATCC BAA-477 / NRRL B-23932 / Pf-5</strain>
    </source>
</reference>